<name>IRLC_DICDI</name>
<keyword id="KW-0067">ATP-binding</keyword>
<keyword id="KW-0175">Coiled coil</keyword>
<keyword id="KW-0418">Kinase</keyword>
<keyword id="KW-0479">Metal-binding</keyword>
<keyword id="KW-0547">Nucleotide-binding</keyword>
<keyword id="KW-1185">Reference proteome</keyword>
<keyword id="KW-0723">Serine/threonine-protein kinase</keyword>
<keyword id="KW-0808">Transferase</keyword>
<keyword id="KW-0862">Zinc</keyword>
<keyword id="KW-0863">Zinc-finger</keyword>
<gene>
    <name type="primary">irlC</name>
    <name type="ORF">DDB_G0270894</name>
</gene>
<proteinExistence type="inferred from homology"/>
<evidence type="ECO:0000255" key="1"/>
<evidence type="ECO:0000255" key="2">
    <source>
        <dbReference type="PROSITE-ProRule" id="PRU00159"/>
    </source>
</evidence>
<evidence type="ECO:0000255" key="3">
    <source>
        <dbReference type="PROSITE-ProRule" id="PRU00325"/>
    </source>
</evidence>
<evidence type="ECO:0000255" key="4">
    <source>
        <dbReference type="PROSITE-ProRule" id="PRU00725"/>
    </source>
</evidence>
<evidence type="ECO:0000256" key="5">
    <source>
        <dbReference type="SAM" id="MobiDB-lite"/>
    </source>
</evidence>
<comment type="catalytic activity">
    <reaction>
        <text>L-seryl-[protein] + ATP = O-phospho-L-seryl-[protein] + ADP + H(+)</text>
        <dbReference type="Rhea" id="RHEA:17989"/>
        <dbReference type="Rhea" id="RHEA-COMP:9863"/>
        <dbReference type="Rhea" id="RHEA-COMP:11604"/>
        <dbReference type="ChEBI" id="CHEBI:15378"/>
        <dbReference type="ChEBI" id="CHEBI:29999"/>
        <dbReference type="ChEBI" id="CHEBI:30616"/>
        <dbReference type="ChEBI" id="CHEBI:83421"/>
        <dbReference type="ChEBI" id="CHEBI:456216"/>
        <dbReference type="EC" id="2.7.11.1"/>
    </reaction>
</comment>
<comment type="catalytic activity">
    <reaction>
        <text>L-threonyl-[protein] + ATP = O-phospho-L-threonyl-[protein] + ADP + H(+)</text>
        <dbReference type="Rhea" id="RHEA:46608"/>
        <dbReference type="Rhea" id="RHEA-COMP:11060"/>
        <dbReference type="Rhea" id="RHEA-COMP:11605"/>
        <dbReference type="ChEBI" id="CHEBI:15378"/>
        <dbReference type="ChEBI" id="CHEBI:30013"/>
        <dbReference type="ChEBI" id="CHEBI:30616"/>
        <dbReference type="ChEBI" id="CHEBI:61977"/>
        <dbReference type="ChEBI" id="CHEBI:456216"/>
        <dbReference type="EC" id="2.7.11.1"/>
    </reaction>
</comment>
<comment type="similarity">
    <text evidence="2">Belongs to the protein kinase superfamily. Ser/Thr protein kinase family.</text>
</comment>
<dbReference type="EC" id="2.7.11.1"/>
<dbReference type="EMBL" id="AAFI02000005">
    <property type="protein sequence ID" value="EAL72797.1"/>
    <property type="molecule type" value="Genomic_DNA"/>
</dbReference>
<dbReference type="RefSeq" id="XP_646133.1">
    <property type="nucleotide sequence ID" value="XM_641041.1"/>
</dbReference>
<dbReference type="SMR" id="Q55DJ8"/>
<dbReference type="FunCoup" id="Q55DJ8">
    <property type="interactions" value="247"/>
</dbReference>
<dbReference type="STRING" id="44689.Q55DJ8"/>
<dbReference type="PaxDb" id="44689-DDB0231222"/>
<dbReference type="EnsemblProtists" id="EAL72797">
    <property type="protein sequence ID" value="EAL72797"/>
    <property type="gene ID" value="DDB_G0270894"/>
</dbReference>
<dbReference type="GeneID" id="8617083"/>
<dbReference type="KEGG" id="ddi:DDB_G0270894"/>
<dbReference type="dictyBase" id="DDB_G0270894">
    <property type="gene designation" value="irlC"/>
</dbReference>
<dbReference type="VEuPathDB" id="AmoebaDB:DDB_G0270894"/>
<dbReference type="eggNOG" id="KOG1027">
    <property type="taxonomic scope" value="Eukaryota"/>
</dbReference>
<dbReference type="HOGENOM" id="CLU_248487_0_0_1"/>
<dbReference type="InParanoid" id="Q55DJ8"/>
<dbReference type="OMA" id="QNINHEE"/>
<dbReference type="PRO" id="PR:Q55DJ8"/>
<dbReference type="Proteomes" id="UP000002195">
    <property type="component" value="Chromosome 1"/>
</dbReference>
<dbReference type="GO" id="GO:1990604">
    <property type="term" value="C:IRE1-TRAF2-ASK1 complex"/>
    <property type="evidence" value="ECO:0000318"/>
    <property type="project" value="GO_Central"/>
</dbReference>
<dbReference type="GO" id="GO:0005524">
    <property type="term" value="F:ATP binding"/>
    <property type="evidence" value="ECO:0007669"/>
    <property type="project" value="UniProtKB-KW"/>
</dbReference>
<dbReference type="GO" id="GO:0106310">
    <property type="term" value="F:protein serine kinase activity"/>
    <property type="evidence" value="ECO:0007669"/>
    <property type="project" value="RHEA"/>
</dbReference>
<dbReference type="GO" id="GO:0004674">
    <property type="term" value="F:protein serine/threonine kinase activity"/>
    <property type="evidence" value="ECO:0000318"/>
    <property type="project" value="GO_Central"/>
</dbReference>
<dbReference type="GO" id="GO:0004521">
    <property type="term" value="F:RNA endonuclease activity"/>
    <property type="evidence" value="ECO:0000318"/>
    <property type="project" value="GO_Central"/>
</dbReference>
<dbReference type="GO" id="GO:0051082">
    <property type="term" value="F:unfolded protein binding"/>
    <property type="evidence" value="ECO:0000318"/>
    <property type="project" value="GO_Central"/>
</dbReference>
<dbReference type="GO" id="GO:0008270">
    <property type="term" value="F:zinc ion binding"/>
    <property type="evidence" value="ECO:0007669"/>
    <property type="project" value="UniProtKB-KW"/>
</dbReference>
<dbReference type="GO" id="GO:0036498">
    <property type="term" value="P:IRE1-mediated unfolded protein response"/>
    <property type="evidence" value="ECO:0000318"/>
    <property type="project" value="GO_Central"/>
</dbReference>
<dbReference type="GO" id="GO:0006397">
    <property type="term" value="P:mRNA processing"/>
    <property type="evidence" value="ECO:0007669"/>
    <property type="project" value="InterPro"/>
</dbReference>
<dbReference type="CDD" id="cd10321">
    <property type="entry name" value="RNase_Ire1_like"/>
    <property type="match status" value="1"/>
</dbReference>
<dbReference type="FunFam" id="1.20.1440.180:FF:000005">
    <property type="entry name" value="Probable serine/threonine-protein kinase irlD"/>
    <property type="match status" value="1"/>
</dbReference>
<dbReference type="FunFam" id="1.10.510.10:FF:001066">
    <property type="entry name" value="Probable serine/threonine-protein kinase irlE"/>
    <property type="match status" value="1"/>
</dbReference>
<dbReference type="FunFam" id="3.30.200.20:FF:000077">
    <property type="entry name" value="Putative Serine/threonine-protein kinase/endoribonuclease IRE1"/>
    <property type="match status" value="1"/>
</dbReference>
<dbReference type="Gene3D" id="1.20.1440.180">
    <property type="entry name" value="KEN domain"/>
    <property type="match status" value="1"/>
</dbReference>
<dbReference type="Gene3D" id="3.30.200.20">
    <property type="entry name" value="Phosphorylase Kinase, domain 1"/>
    <property type="match status" value="1"/>
</dbReference>
<dbReference type="Gene3D" id="1.10.510.10">
    <property type="entry name" value="Transferase(Phosphotransferase) domain 1"/>
    <property type="match status" value="1"/>
</dbReference>
<dbReference type="InterPro" id="IPR045133">
    <property type="entry name" value="IRE1/2-like"/>
</dbReference>
<dbReference type="InterPro" id="IPR010513">
    <property type="entry name" value="KEN_dom"/>
</dbReference>
<dbReference type="InterPro" id="IPR038357">
    <property type="entry name" value="KEN_sf"/>
</dbReference>
<dbReference type="InterPro" id="IPR011009">
    <property type="entry name" value="Kinase-like_dom_sf"/>
</dbReference>
<dbReference type="InterPro" id="IPR000719">
    <property type="entry name" value="Prot_kinase_dom"/>
</dbReference>
<dbReference type="InterPro" id="IPR007527">
    <property type="entry name" value="Znf_SWIM"/>
</dbReference>
<dbReference type="PANTHER" id="PTHR13954">
    <property type="entry name" value="IRE1-RELATED"/>
    <property type="match status" value="1"/>
</dbReference>
<dbReference type="PANTHER" id="PTHR13954:SF12">
    <property type="entry name" value="SERINE_THREONINE-PROTEIN KINASE IRLA-RELATED"/>
    <property type="match status" value="1"/>
</dbReference>
<dbReference type="Pfam" id="PF00069">
    <property type="entry name" value="Pkinase"/>
    <property type="match status" value="1"/>
</dbReference>
<dbReference type="Pfam" id="PF06479">
    <property type="entry name" value="Ribonuc_2-5A"/>
    <property type="match status" value="1"/>
</dbReference>
<dbReference type="SUPFAM" id="SSF56112">
    <property type="entry name" value="Protein kinase-like (PK-like)"/>
    <property type="match status" value="1"/>
</dbReference>
<dbReference type="PROSITE" id="PS51392">
    <property type="entry name" value="KEN"/>
    <property type="match status" value="1"/>
</dbReference>
<dbReference type="PROSITE" id="PS50011">
    <property type="entry name" value="PROTEIN_KINASE_DOM"/>
    <property type="match status" value="1"/>
</dbReference>
<dbReference type="PROSITE" id="PS50966">
    <property type="entry name" value="ZF_SWIM"/>
    <property type="match status" value="1"/>
</dbReference>
<sequence>MKSNYSTYLYKMSELERIVNGGDVSSIFIEQDDVLGEIKNFNYDLYTKYDSLVLKDPQTQNNSPKPPSLEIFILVNLIALCGRINDKFPNLDKFLTHYKYATNIFNLLSENIINSIEKFKETLSKDLPSFQLSVIANSSIVKKDNSIIKFLSCFGSFMKLESIEYFGSVFNSLIGEEDQFSLDLLQVLIDSSNEYKKFLQILEFNQLQKYYDDGHLCLFHSIKFDNLNEFKLLFNDSTWCQQQQQQQQINPQIFWFILCKYNSSKIAHYLLNDYQINKKSLKQKNPLEISPVTLLEIAFLCFSDKIAIVLFSQFNYHELLPKKSKMKHLIKSTSTLINNNNNNNNNNNNNNNNNNNNNNNNNNNNNNNSKNIGLTQYTVLEGYFLINIRTRSRIAPFIEVLTMNGIHLTNDIIHTRIKSMSSDSIFRIFTEQYQQQQQNPLNNNQKQIQFNENFTRQQKIDFDNCPNEIDTFILDKTQCNLITLSQEFSIKVRAFTFYLSFGEIFTCSCEDYKREFSCKHMFFILLNYYHVPRNSYLIYQRQFTEIERYSIIMNIDLSKINSRIYGTPNFNTFFKIKSSPSSTTSPFQSINNNNNNNLNNNNNNNLNNNNNNENENKFKEDGDDEILQNLNRLNYILLRDFEFGPNDITTKLRETHINLFDRLLLIEDNLEALDKILKNFTQKGCTLSRDLVGDRNLLVLVAILDSTSKEKLSLLNKYWPLPEKTKKFAIPLIFFAISEECLKMFIQISPNLVKSTLNLHDWISILTEFALINETFLDHYPLLSAWYSDARSVETSLFRLFTCMDKIDCINYLIQTYLLPIPTFKNTLNNFETCYFFETYFLENSSIKAEQYLLEQELLEKKKQKEKKKQKQKQSKSKIINNPLSSSSSSSSSPSTSNTTITSTTPTTTTTTTTTTTPTTTTTTTTTSSPKQKPITPIKKEIEKEFEKIELTTPPPPLATTKQQQINENYDISIGKFKFNRKEENVLGRGSNGTLVFKGIWNNRIPVAIKQMQKMFNPLISKEIEVLITLTNKNCYNIVRYIDQEEDESCVYLGLTLCDGSLQNLVEKGDNNLTLTQFLGYDINSSSKNNSRLLELIKDIVYGIQFLHQQGIVHNDLNPRNILIKDDRFIISDLGLSKMEVTSSYSFTMHAPTGQEGFHPAEVLLEKRKTKSVDIFSMGCILFYLMTGGQHPFGDKFYRIVNILTDKPILEPLKHNLVACDLISQMISKNESDRPTIEKILLHPFFWNHEKKVKFIDASLNLFKDSNGLFTSKLNKLINYQEINLKNNIDSSSSNNNNNINSNVINNNNNNNNGMATNIPFLSKPWNQLIDQTLIEHIINKQNQLNGVGNNKKVIIYSFDQVKDLVRCIRNTIQHHKEIQRLVRQSPSSNGDNKQEVLDCLESQELVLSYFEEKVPDLLLFLYQKFKKHLDSKSLIYFNDLIIK</sequence>
<protein>
    <recommendedName>
        <fullName>Probable serine/threonine-protein kinase irlC</fullName>
        <ecNumber>2.7.11.1</ecNumber>
    </recommendedName>
    <alternativeName>
        <fullName>Inositol-requiring protein-like protein kinase C</fullName>
    </alternativeName>
</protein>
<organism>
    <name type="scientific">Dictyostelium discoideum</name>
    <name type="common">Social amoeba</name>
    <dbReference type="NCBI Taxonomy" id="44689"/>
    <lineage>
        <taxon>Eukaryota</taxon>
        <taxon>Amoebozoa</taxon>
        <taxon>Evosea</taxon>
        <taxon>Eumycetozoa</taxon>
        <taxon>Dictyostelia</taxon>
        <taxon>Dictyosteliales</taxon>
        <taxon>Dictyosteliaceae</taxon>
        <taxon>Dictyostelium</taxon>
    </lineage>
</organism>
<feature type="chain" id="PRO_0000362018" description="Probable serine/threonine-protein kinase irlC">
    <location>
        <begin position="1"/>
        <end position="1444"/>
    </location>
</feature>
<feature type="domain" description="Protein kinase" evidence="2">
    <location>
        <begin position="981"/>
        <end position="1246"/>
    </location>
</feature>
<feature type="domain" description="KEN" evidence="4">
    <location>
        <begin position="1279"/>
        <end position="1444"/>
    </location>
</feature>
<feature type="zinc finger region" description="SWIM-type" evidence="3">
    <location>
        <begin position="495"/>
        <end position="529"/>
    </location>
</feature>
<feature type="region of interest" description="Disordered" evidence="5">
    <location>
        <begin position="335"/>
        <end position="370"/>
    </location>
</feature>
<feature type="region of interest" description="Disordered" evidence="5">
    <location>
        <begin position="584"/>
        <end position="619"/>
    </location>
</feature>
<feature type="region of interest" description="Disordered" evidence="5">
    <location>
        <begin position="864"/>
        <end position="938"/>
    </location>
</feature>
<feature type="coiled-coil region" evidence="1">
    <location>
        <begin position="593"/>
        <end position="620"/>
    </location>
</feature>
<feature type="coiled-coil region" evidence="1">
    <location>
        <begin position="847"/>
        <end position="879"/>
    </location>
</feature>
<feature type="compositionally biased region" description="Low complexity" evidence="5">
    <location>
        <begin position="338"/>
        <end position="368"/>
    </location>
</feature>
<feature type="compositionally biased region" description="Low complexity" evidence="5">
    <location>
        <begin position="584"/>
        <end position="613"/>
    </location>
</feature>
<feature type="compositionally biased region" description="Basic residues" evidence="5">
    <location>
        <begin position="864"/>
        <end position="876"/>
    </location>
</feature>
<feature type="compositionally biased region" description="Low complexity" evidence="5">
    <location>
        <begin position="885"/>
        <end position="937"/>
    </location>
</feature>
<feature type="active site" description="Proton acceptor" evidence="2">
    <location>
        <position position="1116"/>
    </location>
</feature>
<feature type="binding site" evidence="2">
    <location>
        <begin position="987"/>
        <end position="995"/>
    </location>
    <ligand>
        <name>ATP</name>
        <dbReference type="ChEBI" id="CHEBI:30616"/>
    </ligand>
</feature>
<feature type="binding site" evidence="2">
    <location>
        <position position="1010"/>
    </location>
    <ligand>
        <name>ATP</name>
        <dbReference type="ChEBI" id="CHEBI:30616"/>
    </ligand>
</feature>
<accession>Q55DJ8</accession>
<reference key="1">
    <citation type="journal article" date="2005" name="Nature">
        <title>The genome of the social amoeba Dictyostelium discoideum.</title>
        <authorList>
            <person name="Eichinger L."/>
            <person name="Pachebat J.A."/>
            <person name="Gloeckner G."/>
            <person name="Rajandream M.A."/>
            <person name="Sucgang R."/>
            <person name="Berriman M."/>
            <person name="Song J."/>
            <person name="Olsen R."/>
            <person name="Szafranski K."/>
            <person name="Xu Q."/>
            <person name="Tunggal B."/>
            <person name="Kummerfeld S."/>
            <person name="Madera M."/>
            <person name="Konfortov B.A."/>
            <person name="Rivero F."/>
            <person name="Bankier A.T."/>
            <person name="Lehmann R."/>
            <person name="Hamlin N."/>
            <person name="Davies R."/>
            <person name="Gaudet P."/>
            <person name="Fey P."/>
            <person name="Pilcher K."/>
            <person name="Chen G."/>
            <person name="Saunders D."/>
            <person name="Sodergren E.J."/>
            <person name="Davis P."/>
            <person name="Kerhornou A."/>
            <person name="Nie X."/>
            <person name="Hall N."/>
            <person name="Anjard C."/>
            <person name="Hemphill L."/>
            <person name="Bason N."/>
            <person name="Farbrother P."/>
            <person name="Desany B."/>
            <person name="Just E."/>
            <person name="Morio T."/>
            <person name="Rost R."/>
            <person name="Churcher C.M."/>
            <person name="Cooper J."/>
            <person name="Haydock S."/>
            <person name="van Driessche N."/>
            <person name="Cronin A."/>
            <person name="Goodhead I."/>
            <person name="Muzny D.M."/>
            <person name="Mourier T."/>
            <person name="Pain A."/>
            <person name="Lu M."/>
            <person name="Harper D."/>
            <person name="Lindsay R."/>
            <person name="Hauser H."/>
            <person name="James K.D."/>
            <person name="Quiles M."/>
            <person name="Madan Babu M."/>
            <person name="Saito T."/>
            <person name="Buchrieser C."/>
            <person name="Wardroper A."/>
            <person name="Felder M."/>
            <person name="Thangavelu M."/>
            <person name="Johnson D."/>
            <person name="Knights A."/>
            <person name="Loulseged H."/>
            <person name="Mungall K.L."/>
            <person name="Oliver K."/>
            <person name="Price C."/>
            <person name="Quail M.A."/>
            <person name="Urushihara H."/>
            <person name="Hernandez J."/>
            <person name="Rabbinowitsch E."/>
            <person name="Steffen D."/>
            <person name="Sanders M."/>
            <person name="Ma J."/>
            <person name="Kohara Y."/>
            <person name="Sharp S."/>
            <person name="Simmonds M.N."/>
            <person name="Spiegler S."/>
            <person name="Tivey A."/>
            <person name="Sugano S."/>
            <person name="White B."/>
            <person name="Walker D."/>
            <person name="Woodward J.R."/>
            <person name="Winckler T."/>
            <person name="Tanaka Y."/>
            <person name="Shaulsky G."/>
            <person name="Schleicher M."/>
            <person name="Weinstock G.M."/>
            <person name="Rosenthal A."/>
            <person name="Cox E.C."/>
            <person name="Chisholm R.L."/>
            <person name="Gibbs R.A."/>
            <person name="Loomis W.F."/>
            <person name="Platzer M."/>
            <person name="Kay R.R."/>
            <person name="Williams J.G."/>
            <person name="Dear P.H."/>
            <person name="Noegel A.A."/>
            <person name="Barrell B.G."/>
            <person name="Kuspa A."/>
        </authorList>
    </citation>
    <scope>NUCLEOTIDE SEQUENCE [LARGE SCALE GENOMIC DNA]</scope>
    <source>
        <strain>AX4</strain>
    </source>
</reference>